<comment type="function">
    <text evidence="1 3 4">Part of the ESX-5 specialized secretion system, which is responsible for the secretion of EsxN and a number of PE_PGRS and PPE proteins (PubMed:19602152, PubMed:22925462). EccA5 exhibits ATPase activity and may provide energy for the export of ESX-5 substrates (By similarity).</text>
</comment>
<comment type="subunit">
    <text evidence="1">Part of the ESX-5 / type VII secretion system (T7SS), which is composed of cytosolic and membrane components.</text>
</comment>
<comment type="subcellular location">
    <subcellularLocation>
        <location evidence="4">Cytoplasm</location>
    </subcellularLocation>
</comment>
<comment type="similarity">
    <text evidence="6">Belongs to the CbxX/CfxQ family.</text>
</comment>
<reference key="1">
    <citation type="journal article" date="2008" name="Genome Res.">
        <title>Insights from the complete genome sequence of Mycobacterium marinum on the evolution of Mycobacterium tuberculosis.</title>
        <authorList>
            <person name="Stinear T.P."/>
            <person name="Seemann T."/>
            <person name="Harrison P.F."/>
            <person name="Jenkin G.A."/>
            <person name="Davies J.K."/>
            <person name="Johnson P.D."/>
            <person name="Abdellah Z."/>
            <person name="Arrowsmith C."/>
            <person name="Chillingworth T."/>
            <person name="Churcher C."/>
            <person name="Clarke K."/>
            <person name="Cronin A."/>
            <person name="Davis P."/>
            <person name="Goodhead I."/>
            <person name="Holroyd N."/>
            <person name="Jagels K."/>
            <person name="Lord A."/>
            <person name="Moule S."/>
            <person name="Mungall K."/>
            <person name="Norbertczak H."/>
            <person name="Quail M.A."/>
            <person name="Rabbinowitsch E."/>
            <person name="Walker D."/>
            <person name="White B."/>
            <person name="Whitehead S."/>
            <person name="Small P.L."/>
            <person name="Brosch R."/>
            <person name="Ramakrishnan L."/>
            <person name="Fischbach M.A."/>
            <person name="Parkhill J."/>
            <person name="Cole S.T."/>
        </authorList>
    </citation>
    <scope>NUCLEOTIDE SEQUENCE [LARGE SCALE GENOMIC DNA]</scope>
    <source>
        <strain>ATCC BAA-535 / M</strain>
    </source>
</reference>
<reference key="2">
    <citation type="journal article" date="2009" name="Mol. Microbiol.">
        <title>PPE and PE_PGRS proteins of Mycobacterium marinum are transported via the type VII secretion system ESX-5.</title>
        <authorList>
            <person name="Abdallah A.M."/>
            <person name="Verboom T."/>
            <person name="Weerdenburg E.M."/>
            <person name="Gey van Pittius N.C."/>
            <person name="Mahasha P.W."/>
            <person name="Jimenez C."/>
            <person name="Parra M."/>
            <person name="Cadieux N."/>
            <person name="Brennan M.J."/>
            <person name="Appelmelk B.J."/>
            <person name="Bitter W."/>
        </authorList>
    </citation>
    <scope>FUNCTION</scope>
</reference>
<reference key="3">
    <citation type="journal article" date="2012" name="Mol. Microbiol.">
        <title>Composition of the type VII secretion system membrane complex.</title>
        <authorList>
            <person name="Houben E.N."/>
            <person name="Bestebroer J."/>
            <person name="Ummels R."/>
            <person name="Wilson L."/>
            <person name="Piersma S.R."/>
            <person name="Jimenez C.R."/>
            <person name="Ottenhoff T.H."/>
            <person name="Luirink J."/>
            <person name="Bitter W."/>
        </authorList>
    </citation>
    <scope>FUNCTION</scope>
    <scope>SUBCELLULAR LOCATION</scope>
    <source>
        <strain>ATCC BAA-535 / M</strain>
    </source>
</reference>
<accession>B2HSU9</accession>
<gene>
    <name evidence="5" type="primary">eccA5</name>
    <name evidence="7" type="ordered locus">MMAR_2680</name>
</gene>
<feature type="chain" id="PRO_0000434748" description="ESX-5 secretion system protein EccA5">
    <location>
        <begin position="1"/>
        <end position="610"/>
    </location>
</feature>
<feature type="binding site" evidence="2">
    <location>
        <begin position="357"/>
        <end position="364"/>
    </location>
    <ligand>
        <name>ATP</name>
        <dbReference type="ChEBI" id="CHEBI:30616"/>
    </ligand>
</feature>
<dbReference type="EMBL" id="CP000854">
    <property type="protein sequence ID" value="ACC41123.1"/>
    <property type="molecule type" value="Genomic_DNA"/>
</dbReference>
<dbReference type="RefSeq" id="WP_012394394.1">
    <property type="nucleotide sequence ID" value="NC_010612.1"/>
</dbReference>
<dbReference type="SMR" id="B2HSU9"/>
<dbReference type="STRING" id="216594.MMAR_2680"/>
<dbReference type="GeneID" id="93436816"/>
<dbReference type="KEGG" id="mmi:MMAR_2680"/>
<dbReference type="eggNOG" id="COG0457">
    <property type="taxonomic scope" value="Bacteria"/>
</dbReference>
<dbReference type="eggNOG" id="COG0464">
    <property type="taxonomic scope" value="Bacteria"/>
</dbReference>
<dbReference type="HOGENOM" id="CLU_008749_5_0_11"/>
<dbReference type="OrthoDB" id="9806903at2"/>
<dbReference type="Proteomes" id="UP000001190">
    <property type="component" value="Chromosome"/>
</dbReference>
<dbReference type="GO" id="GO:0005737">
    <property type="term" value="C:cytoplasm"/>
    <property type="evidence" value="ECO:0007669"/>
    <property type="project" value="UniProtKB-SubCell"/>
</dbReference>
<dbReference type="GO" id="GO:0005524">
    <property type="term" value="F:ATP binding"/>
    <property type="evidence" value="ECO:0007669"/>
    <property type="project" value="UniProtKB-KW"/>
</dbReference>
<dbReference type="GO" id="GO:0016887">
    <property type="term" value="F:ATP hydrolysis activity"/>
    <property type="evidence" value="ECO:0007669"/>
    <property type="project" value="InterPro"/>
</dbReference>
<dbReference type="FunFam" id="1.25.40.10:FF:000424">
    <property type="entry name" value="Type VII secretion AAA-ATPase EccA"/>
    <property type="match status" value="1"/>
</dbReference>
<dbReference type="FunFam" id="3.40.50.300:FF:001169">
    <property type="entry name" value="Type VII secretion AAA-ATPase EccA"/>
    <property type="match status" value="1"/>
</dbReference>
<dbReference type="Gene3D" id="1.10.8.60">
    <property type="match status" value="1"/>
</dbReference>
<dbReference type="Gene3D" id="3.40.50.300">
    <property type="entry name" value="P-loop containing nucleotide triphosphate hydrolases"/>
    <property type="match status" value="1"/>
</dbReference>
<dbReference type="Gene3D" id="1.25.40.10">
    <property type="entry name" value="Tetratricopeptide repeat domain"/>
    <property type="match status" value="1"/>
</dbReference>
<dbReference type="InterPro" id="IPR003593">
    <property type="entry name" value="AAA+_ATPase"/>
</dbReference>
<dbReference type="InterPro" id="IPR003959">
    <property type="entry name" value="ATPase_AAA_core"/>
</dbReference>
<dbReference type="InterPro" id="IPR000641">
    <property type="entry name" value="CbxX/CfxQ"/>
</dbReference>
<dbReference type="InterPro" id="IPR050773">
    <property type="entry name" value="CbxX/CfxQ_RuBisCO_ESX"/>
</dbReference>
<dbReference type="InterPro" id="IPR027417">
    <property type="entry name" value="P-loop_NTPase"/>
</dbReference>
<dbReference type="InterPro" id="IPR023835">
    <property type="entry name" value="T7SS_EccA"/>
</dbReference>
<dbReference type="InterPro" id="IPR049078">
    <property type="entry name" value="T7SS_EccA1-like_N"/>
</dbReference>
<dbReference type="InterPro" id="IPR011990">
    <property type="entry name" value="TPR-like_helical_dom_sf"/>
</dbReference>
<dbReference type="NCBIfam" id="TIGR03922">
    <property type="entry name" value="T7SS_EccA"/>
    <property type="match status" value="1"/>
</dbReference>
<dbReference type="PANTHER" id="PTHR43392">
    <property type="entry name" value="AAA-TYPE ATPASE FAMILY PROTEIN / ANKYRIN REPEAT FAMILY PROTEIN"/>
    <property type="match status" value="1"/>
</dbReference>
<dbReference type="PANTHER" id="PTHR43392:SF2">
    <property type="entry name" value="AAA-TYPE ATPASE FAMILY PROTEIN _ ANKYRIN REPEAT FAMILY PROTEIN"/>
    <property type="match status" value="1"/>
</dbReference>
<dbReference type="Pfam" id="PF00004">
    <property type="entry name" value="AAA"/>
    <property type="match status" value="1"/>
</dbReference>
<dbReference type="Pfam" id="PF21545">
    <property type="entry name" value="T7SS_EccA1_N"/>
    <property type="match status" value="1"/>
</dbReference>
<dbReference type="PRINTS" id="PR00819">
    <property type="entry name" value="CBXCFQXSUPER"/>
</dbReference>
<dbReference type="SMART" id="SM00382">
    <property type="entry name" value="AAA"/>
    <property type="match status" value="1"/>
</dbReference>
<dbReference type="SUPFAM" id="SSF52540">
    <property type="entry name" value="P-loop containing nucleoside triphosphate hydrolases"/>
    <property type="match status" value="1"/>
</dbReference>
<dbReference type="SUPFAM" id="SSF48452">
    <property type="entry name" value="TPR-like"/>
    <property type="match status" value="1"/>
</dbReference>
<sequence length="610" mass="67673">MTRAQSAADDARNAMVAGLLASGISVNGLQPSHNPQVAAKMFTTATKLDPAMCDAWLARLLAGDQTMDVLAGAWAAVRTFGWETRRLGVTDLQFRPEVSDGLFLRLAVTSVDSLACAYAAVLAENKRYQEASDLLDTTDPKHPFDAELVSYVRGVLYFRTKRWPDVLAQFPEATPWRHPELKAAGAAMATTALASLGVFEEAFRRAQEAIEGDRVPGAANIALYTQGMCLRHVGREEEAVELLRRVYSRDAKFSPAREALDNPNYRLVLTDPETIEARKDPWDPDSAPTRAQTEAARHAEMAAKYLAEGDAELNAMLGMEQAKKEIKLIKSTTKVNLARAKMGLPVPVTSRHTLLLGPPGTGKTSVARAFTKQLCGLTVLRKPLVVETSRTKLLGRYMADAEKNTEEMLEGSLGGAVFFDEMHTLHEKGYSQGDPYGNAIINTLLLYMENHRDELVVFGAGYAKAMEKMLEVNQGLRRRFSTVIEFFSYTPEELIALTKLMGQENEDVITEEEAQVLLPSYTRFYNDQNYSEDGDLIRGIDMLGNAGFVRNVVEKARDHRSFRLDDEDLDAVLNSDLTEFSELQMRRFRELTKEDLAEGLSAAVAEKKTN</sequence>
<organism>
    <name type="scientific">Mycobacterium marinum (strain ATCC BAA-535 / M)</name>
    <dbReference type="NCBI Taxonomy" id="216594"/>
    <lineage>
        <taxon>Bacteria</taxon>
        <taxon>Bacillati</taxon>
        <taxon>Actinomycetota</taxon>
        <taxon>Actinomycetes</taxon>
        <taxon>Mycobacteriales</taxon>
        <taxon>Mycobacteriaceae</taxon>
        <taxon>Mycobacterium</taxon>
        <taxon>Mycobacterium ulcerans group</taxon>
    </lineage>
</organism>
<keyword id="KW-0067">ATP-binding</keyword>
<keyword id="KW-0963">Cytoplasm</keyword>
<keyword id="KW-0547">Nucleotide-binding</keyword>
<keyword id="KW-1185">Reference proteome</keyword>
<evidence type="ECO:0000250" key="1">
    <source>
        <dbReference type="UniProtKB" id="P9WPH9"/>
    </source>
</evidence>
<evidence type="ECO:0000255" key="2"/>
<evidence type="ECO:0000269" key="3">
    <source>
    </source>
</evidence>
<evidence type="ECO:0000269" key="4">
    <source>
    </source>
</evidence>
<evidence type="ECO:0000303" key="5">
    <source>
    </source>
</evidence>
<evidence type="ECO:0000305" key="6"/>
<evidence type="ECO:0000312" key="7">
    <source>
        <dbReference type="EMBL" id="ACC41123.1"/>
    </source>
</evidence>
<protein>
    <recommendedName>
        <fullName evidence="6">ESX-5 secretion system protein EccA5</fullName>
    </recommendedName>
    <alternativeName>
        <fullName evidence="6">ESX conserved component A5</fullName>
    </alternativeName>
    <alternativeName>
        <fullName evidence="6">Type VII secretion system protein EccA5</fullName>
        <shortName evidence="6">T7SS protein EccA5</shortName>
    </alternativeName>
</protein>
<name>ECCA5_MYCMM</name>
<proteinExistence type="inferred from homology"/>